<feature type="chain" id="PRO_1000050615" description="Peptidase E">
    <location>
        <begin position="1"/>
        <end position="237"/>
    </location>
</feature>
<feature type="active site" description="Charge relay system" evidence="1">
    <location>
        <position position="122"/>
    </location>
</feature>
<feature type="active site" description="Charge relay system" evidence="1">
    <location>
        <position position="137"/>
    </location>
</feature>
<feature type="active site" description="Charge relay system" evidence="1">
    <location>
        <position position="159"/>
    </location>
</feature>
<dbReference type="EC" id="3.4.13.21" evidence="1"/>
<dbReference type="EMBL" id="CP000753">
    <property type="protein sequence ID" value="ABS08731.1"/>
    <property type="molecule type" value="Genomic_DNA"/>
</dbReference>
<dbReference type="RefSeq" id="WP_012089481.1">
    <property type="nucleotide sequence ID" value="NC_009665.1"/>
</dbReference>
<dbReference type="SMR" id="A6WPJ2"/>
<dbReference type="MEROPS" id="S51.001"/>
<dbReference type="KEGG" id="sbm:Shew185_2596"/>
<dbReference type="HOGENOM" id="CLU_071689_0_0_6"/>
<dbReference type="GO" id="GO:0005737">
    <property type="term" value="C:cytoplasm"/>
    <property type="evidence" value="ECO:0007669"/>
    <property type="project" value="UniProtKB-SubCell"/>
</dbReference>
<dbReference type="GO" id="GO:0016805">
    <property type="term" value="F:dipeptidase activity"/>
    <property type="evidence" value="ECO:0007669"/>
    <property type="project" value="UniProtKB-UniRule"/>
</dbReference>
<dbReference type="GO" id="GO:0008236">
    <property type="term" value="F:serine-type peptidase activity"/>
    <property type="evidence" value="ECO:0007669"/>
    <property type="project" value="UniProtKB-KW"/>
</dbReference>
<dbReference type="GO" id="GO:0006508">
    <property type="term" value="P:proteolysis"/>
    <property type="evidence" value="ECO:0007669"/>
    <property type="project" value="UniProtKB-UniRule"/>
</dbReference>
<dbReference type="CDD" id="cd03146">
    <property type="entry name" value="GAT1_Peptidase_E"/>
    <property type="match status" value="1"/>
</dbReference>
<dbReference type="FunFam" id="3.40.50.880:FF:000007">
    <property type="entry name" value="Peptidase E"/>
    <property type="match status" value="1"/>
</dbReference>
<dbReference type="Gene3D" id="3.40.50.880">
    <property type="match status" value="1"/>
</dbReference>
<dbReference type="HAMAP" id="MF_00510">
    <property type="entry name" value="Peptidase_E"/>
    <property type="match status" value="1"/>
</dbReference>
<dbReference type="InterPro" id="IPR029062">
    <property type="entry name" value="Class_I_gatase-like"/>
</dbReference>
<dbReference type="InterPro" id="IPR005320">
    <property type="entry name" value="Peptidase_S51"/>
</dbReference>
<dbReference type="InterPro" id="IPR023172">
    <property type="entry name" value="Peptidase_S51_dipeptidase-E"/>
</dbReference>
<dbReference type="NCBIfam" id="NF003642">
    <property type="entry name" value="PRK05282.1"/>
    <property type="match status" value="1"/>
</dbReference>
<dbReference type="PANTHER" id="PTHR20842:SF0">
    <property type="entry name" value="ALPHA-ASPARTYL DIPEPTIDASE"/>
    <property type="match status" value="1"/>
</dbReference>
<dbReference type="PANTHER" id="PTHR20842">
    <property type="entry name" value="PROTEASE S51 ALPHA-ASPARTYL DIPEPTIDASE"/>
    <property type="match status" value="1"/>
</dbReference>
<dbReference type="Pfam" id="PF03575">
    <property type="entry name" value="Peptidase_S51"/>
    <property type="match status" value="1"/>
</dbReference>
<dbReference type="SUPFAM" id="SSF52317">
    <property type="entry name" value="Class I glutamine amidotransferase-like"/>
    <property type="match status" value="1"/>
</dbReference>
<sequence length="237" mass="25872">MTINALLLSSSRVGDTPYLAHAIPFIKPLTTNAQKWIFIPYAGVSMSYDNYLASVVTGLSELELDISGIHQHPDPQQAIKDADGILIGGGNTFHLLHQLYRYDLVTLIGEQVALGKPYIGWSAGSNVSGQSIRTTNDMPIIEPPSFKALNLLPFQLNPHYSNYQAPGHNGETRAQRLLEFTKVDPLTPVVGIVEGSALWRQGDKLSLLGDQPAYLFCGEQQEIPIPVGSDLSHLLKA</sequence>
<comment type="function">
    <text evidence="1">Hydrolyzes dipeptides containing N-terminal aspartate residues. May play a role in allowing the cell to use peptide aspartate to spare carbon otherwise required for the synthesis of the aspartate family of amino acids.</text>
</comment>
<comment type="catalytic activity">
    <reaction evidence="1">
        <text>Dipeptidase E catalyzes the hydrolysis of dipeptides Asp-|-Xaa. It does not act on peptides with N-terminal Glu, Asn or Gln, nor does it cleave isoaspartyl peptides.</text>
        <dbReference type="EC" id="3.4.13.21"/>
    </reaction>
</comment>
<comment type="subcellular location">
    <subcellularLocation>
        <location evidence="1">Cytoplasm</location>
    </subcellularLocation>
</comment>
<comment type="similarity">
    <text evidence="1">Belongs to the peptidase S51 family.</text>
</comment>
<protein>
    <recommendedName>
        <fullName evidence="1">Peptidase E</fullName>
        <ecNumber evidence="1">3.4.13.21</ecNumber>
    </recommendedName>
    <alternativeName>
        <fullName evidence="1">Alpha-aspartyl dipeptidase</fullName>
    </alternativeName>
    <alternativeName>
        <fullName evidence="1">Asp-specific dipeptidase</fullName>
    </alternativeName>
    <alternativeName>
        <fullName evidence="1">Dipeptidase E</fullName>
    </alternativeName>
</protein>
<evidence type="ECO:0000255" key="1">
    <source>
        <dbReference type="HAMAP-Rule" id="MF_00510"/>
    </source>
</evidence>
<accession>A6WPJ2</accession>
<proteinExistence type="inferred from homology"/>
<keyword id="KW-0963">Cytoplasm</keyword>
<keyword id="KW-0224">Dipeptidase</keyword>
<keyword id="KW-0378">Hydrolase</keyword>
<keyword id="KW-0645">Protease</keyword>
<keyword id="KW-0720">Serine protease</keyword>
<organism>
    <name type="scientific">Shewanella baltica (strain OS185)</name>
    <dbReference type="NCBI Taxonomy" id="402882"/>
    <lineage>
        <taxon>Bacteria</taxon>
        <taxon>Pseudomonadati</taxon>
        <taxon>Pseudomonadota</taxon>
        <taxon>Gammaproteobacteria</taxon>
        <taxon>Alteromonadales</taxon>
        <taxon>Shewanellaceae</taxon>
        <taxon>Shewanella</taxon>
    </lineage>
</organism>
<name>PEPE_SHEB8</name>
<reference key="1">
    <citation type="submission" date="2007-07" db="EMBL/GenBank/DDBJ databases">
        <title>Complete sequence of chromosome of Shewanella baltica OS185.</title>
        <authorList>
            <consortium name="US DOE Joint Genome Institute"/>
            <person name="Copeland A."/>
            <person name="Lucas S."/>
            <person name="Lapidus A."/>
            <person name="Barry K."/>
            <person name="Glavina del Rio T."/>
            <person name="Dalin E."/>
            <person name="Tice H."/>
            <person name="Pitluck S."/>
            <person name="Sims D."/>
            <person name="Brettin T."/>
            <person name="Bruce D."/>
            <person name="Detter J.C."/>
            <person name="Han C."/>
            <person name="Schmutz J."/>
            <person name="Larimer F."/>
            <person name="Land M."/>
            <person name="Hauser L."/>
            <person name="Kyrpides N."/>
            <person name="Mikhailova N."/>
            <person name="Brettar I."/>
            <person name="Rodrigues J."/>
            <person name="Konstantinidis K."/>
            <person name="Tiedje J."/>
            <person name="Richardson P."/>
        </authorList>
    </citation>
    <scope>NUCLEOTIDE SEQUENCE [LARGE SCALE GENOMIC DNA]</scope>
    <source>
        <strain>OS185</strain>
    </source>
</reference>
<gene>
    <name evidence="1" type="primary">pepE</name>
    <name type="ordered locus">Shew185_2596</name>
</gene>